<organism>
    <name type="scientific">Triticum aestivum</name>
    <name type="common">Wheat</name>
    <dbReference type="NCBI Taxonomy" id="4565"/>
    <lineage>
        <taxon>Eukaryota</taxon>
        <taxon>Viridiplantae</taxon>
        <taxon>Streptophyta</taxon>
        <taxon>Embryophyta</taxon>
        <taxon>Tracheophyta</taxon>
        <taxon>Spermatophyta</taxon>
        <taxon>Magnoliopsida</taxon>
        <taxon>Liliopsida</taxon>
        <taxon>Poales</taxon>
        <taxon>Poaceae</taxon>
        <taxon>BOP clade</taxon>
        <taxon>Pooideae</taxon>
        <taxon>Triticodae</taxon>
        <taxon>Triticeae</taxon>
        <taxon>Triticinae</taxon>
        <taxon>Triticum</taxon>
    </lineage>
</organism>
<reference key="1">
    <citation type="online journal article" date="1996" name="Plant Gene Register">
        <title>Nucleotide sequences of two genes (ANT-G1 and ANT-G2) encoding the adenine nucleotide translocator of wheat mitochondria.</title>
        <authorList>
            <person name="Iacobazzi V."/>
            <person name="Poli A."/>
            <person name="Blanco A."/>
            <person name="Palmieri F."/>
        </authorList>
        <locator>PGR96-016</locator>
    </citation>
    <scope>NUCLEOTIDE SEQUENCE [GENOMIC DNA]</scope>
    <source>
        <tissue>Leaf</tissue>
    </source>
</reference>
<accession>Q41629</accession>
<comment type="function">
    <text evidence="1 6">ADP:ATP antiporter that mediates import of ADP into the mitochondrial matrix for ATP synthesis, and export of ATP out to fuel the cell (By similarity). Cycles between the cytoplasmic-open state (c-state) and the matrix-open state (m-state): operates by the alternating access mechanism with a single substrate-binding site intermittently exposed to either the cytosolic (c-state) or matrix (m-state) side of the inner mitochondrial membrane (By similarity).</text>
</comment>
<comment type="catalytic activity">
    <reaction evidence="6">
        <text>ADP(in) + ATP(out) = ADP(out) + ATP(in)</text>
        <dbReference type="Rhea" id="RHEA:34999"/>
        <dbReference type="ChEBI" id="CHEBI:30616"/>
        <dbReference type="ChEBI" id="CHEBI:456216"/>
    </reaction>
    <physiologicalReaction direction="left-to-right" evidence="6">
        <dbReference type="Rhea" id="RHEA:35000"/>
    </physiologicalReaction>
</comment>
<comment type="activity regulation">
    <text evidence="1">The matrix-open state (m-state) is inhibited by the membrane-permeable bongkrekic acid (BKA). The cytoplasmic-open state (c-state) is inhibited by the membrane-impermeable toxic inhibitor carboxyatractyloside (CATR).</text>
</comment>
<comment type="subunit">
    <text evidence="1 2">Monomer.</text>
</comment>
<comment type="subcellular location">
    <subcellularLocation>
        <location evidence="5">Mitochondrion inner membrane</location>
        <topology evidence="7">Multi-pass membrane protein</topology>
    </subcellularLocation>
</comment>
<comment type="domain">
    <text evidence="4">The transmembrane helices are not perpendicular to the plane of the membrane, but cross the membrane at an angle. At least 2 of the odd-numbered transmembrane helices exhibit a sharp kink, due to the presence of a conserved proline residue.</text>
</comment>
<comment type="similarity">
    <text evidence="8">Belongs to the mitochondrial carrier (TC 2.A.29) family.</text>
</comment>
<feature type="transit peptide" description="Mitochondrion">
    <location>
        <begin position="1"/>
        <end status="unknown"/>
    </location>
</feature>
<feature type="chain" id="PRO_0000019253" description="ADP,ATP carrier protein 1, mitochondrial">
    <location>
        <begin status="unknown"/>
        <end position="331"/>
    </location>
</feature>
<feature type="transmembrane region" description="Helical; Name=1" evidence="4">
    <location>
        <begin position="31"/>
        <end position="58"/>
    </location>
</feature>
<feature type="transmembrane region" description="Helical; Name=2" evidence="4">
    <location>
        <begin position="99"/>
        <end position="123"/>
    </location>
</feature>
<feature type="transmembrane region" description="Helical; Name=3" evidence="4">
    <location>
        <begin position="132"/>
        <end position="152"/>
    </location>
</feature>
<feature type="transmembrane region" description="Helical; Name=4" evidence="4">
    <location>
        <begin position="202"/>
        <end position="223"/>
    </location>
</feature>
<feature type="transmembrane region" description="Helical; Name=5" evidence="4">
    <location>
        <begin position="237"/>
        <end position="257"/>
    </location>
</feature>
<feature type="transmembrane region" description="Helical; Name=6" evidence="4">
    <location>
        <begin position="297"/>
        <end position="317"/>
    </location>
</feature>
<feature type="repeat" description="Solcar 1">
    <location>
        <begin position="29"/>
        <end position="122"/>
    </location>
</feature>
<feature type="repeat" description="Solcar 2">
    <location>
        <begin position="134"/>
        <end position="226"/>
    </location>
</feature>
<feature type="repeat" description="Solcar 3">
    <location>
        <begin position="238"/>
        <end position="320"/>
    </location>
</feature>
<feature type="region of interest" description="Important for transport activity" evidence="3">
    <location>
        <begin position="261"/>
        <end position="266"/>
    </location>
</feature>
<feature type="short sequence motif" description="Nucleotide carrier signature motif" evidence="2">
    <location>
        <begin position="261"/>
        <end position="266"/>
    </location>
</feature>
<feature type="binding site" evidence="2">
    <location>
        <position position="104"/>
    </location>
    <ligand>
        <name>ADP</name>
        <dbReference type="ChEBI" id="CHEBI:456216"/>
    </ligand>
</feature>
<feature type="binding site" evidence="2">
    <location>
        <position position="116"/>
    </location>
    <ligand>
        <name>ADP</name>
        <dbReference type="ChEBI" id="CHEBI:456216"/>
    </ligand>
</feature>
<feature type="binding site" evidence="2">
    <location>
        <position position="261"/>
    </location>
    <ligand>
        <name>ADP</name>
        <dbReference type="ChEBI" id="CHEBI:456216"/>
    </ligand>
</feature>
<evidence type="ECO:0000250" key="1">
    <source>
        <dbReference type="UniProtKB" id="G2QNH0"/>
    </source>
</evidence>
<evidence type="ECO:0000250" key="2">
    <source>
        <dbReference type="UniProtKB" id="P02722"/>
    </source>
</evidence>
<evidence type="ECO:0000250" key="3">
    <source>
        <dbReference type="UniProtKB" id="P12235"/>
    </source>
</evidence>
<evidence type="ECO:0000250" key="4">
    <source>
        <dbReference type="UniProtKB" id="P18239"/>
    </source>
</evidence>
<evidence type="ECO:0000250" key="5">
    <source>
        <dbReference type="UniProtKB" id="P31167"/>
    </source>
</evidence>
<evidence type="ECO:0000250" key="6">
    <source>
        <dbReference type="UniProtKB" id="P48962"/>
    </source>
</evidence>
<evidence type="ECO:0000255" key="7"/>
<evidence type="ECO:0000305" key="8"/>
<proteinExistence type="inferred from homology"/>
<keyword id="KW-0050">Antiport</keyword>
<keyword id="KW-0472">Membrane</keyword>
<keyword id="KW-0496">Mitochondrion</keyword>
<keyword id="KW-0999">Mitochondrion inner membrane</keyword>
<keyword id="KW-1185">Reference proteome</keyword>
<keyword id="KW-0677">Repeat</keyword>
<keyword id="KW-0809">Transit peptide</keyword>
<keyword id="KW-0812">Transmembrane</keyword>
<keyword id="KW-1133">Transmembrane helix</keyword>
<keyword id="KW-0813">Transport</keyword>
<protein>
    <recommendedName>
        <fullName>ADP,ATP carrier protein 1, mitochondrial</fullName>
    </recommendedName>
    <alternativeName>
        <fullName>ADP/ATP translocase 1</fullName>
    </alternativeName>
    <alternativeName>
        <fullName>Adenine nucleotide translocator 1</fullName>
        <shortName>ANT 1</shortName>
    </alternativeName>
</protein>
<dbReference type="EMBL" id="X95863">
    <property type="protein sequence ID" value="CAA65119.1"/>
    <property type="molecule type" value="Genomic_DNA"/>
</dbReference>
<dbReference type="SMR" id="Q41629"/>
<dbReference type="STRING" id="4565.Q41629"/>
<dbReference type="PaxDb" id="4565-Traes_6BL_53A305F99.2"/>
<dbReference type="eggNOG" id="KOG0749">
    <property type="taxonomic scope" value="Eukaryota"/>
</dbReference>
<dbReference type="Proteomes" id="UP000019116">
    <property type="component" value="Unplaced"/>
</dbReference>
<dbReference type="ExpressionAtlas" id="Q41629">
    <property type="expression patterns" value="baseline and differential"/>
</dbReference>
<dbReference type="GO" id="GO:0005743">
    <property type="term" value="C:mitochondrial inner membrane"/>
    <property type="evidence" value="ECO:0007669"/>
    <property type="project" value="UniProtKB-SubCell"/>
</dbReference>
<dbReference type="GO" id="GO:0005471">
    <property type="term" value="F:ATP:ADP antiporter activity"/>
    <property type="evidence" value="ECO:0000318"/>
    <property type="project" value="GO_Central"/>
</dbReference>
<dbReference type="GO" id="GO:0140021">
    <property type="term" value="P:mitochondrial ADP transmembrane transport"/>
    <property type="evidence" value="ECO:0007669"/>
    <property type="project" value="InterPro"/>
</dbReference>
<dbReference type="GO" id="GO:1990544">
    <property type="term" value="P:mitochondrial ATP transmembrane transport"/>
    <property type="evidence" value="ECO:0007669"/>
    <property type="project" value="InterPro"/>
</dbReference>
<dbReference type="FunFam" id="1.50.40.10:FF:000001">
    <property type="entry name" value="ADP,ATP carrier protein, mitochondrial"/>
    <property type="match status" value="1"/>
</dbReference>
<dbReference type="Gene3D" id="1.50.40.10">
    <property type="entry name" value="Mitochondrial carrier domain"/>
    <property type="match status" value="1"/>
</dbReference>
<dbReference type="InterPro" id="IPR002113">
    <property type="entry name" value="ADT_euk_type"/>
</dbReference>
<dbReference type="InterPro" id="IPR002067">
    <property type="entry name" value="Mit_carrier"/>
</dbReference>
<dbReference type="InterPro" id="IPR018108">
    <property type="entry name" value="Mitochondrial_sb/sol_carrier"/>
</dbReference>
<dbReference type="InterPro" id="IPR023395">
    <property type="entry name" value="Mt_carrier_dom_sf"/>
</dbReference>
<dbReference type="PANTHER" id="PTHR45635">
    <property type="entry name" value="ADP,ATP CARRIER PROTEIN 1-RELATED-RELATED"/>
    <property type="match status" value="1"/>
</dbReference>
<dbReference type="PANTHER" id="PTHR45635:SF47">
    <property type="entry name" value="ADP,ATP CARRIER PROTEIN, MITOCHONDRIAL"/>
    <property type="match status" value="1"/>
</dbReference>
<dbReference type="Pfam" id="PF00153">
    <property type="entry name" value="Mito_carr"/>
    <property type="match status" value="3"/>
</dbReference>
<dbReference type="PRINTS" id="PR00927">
    <property type="entry name" value="ADPTRNSLCASE"/>
</dbReference>
<dbReference type="PRINTS" id="PR00926">
    <property type="entry name" value="MITOCARRIER"/>
</dbReference>
<dbReference type="SUPFAM" id="SSF103506">
    <property type="entry name" value="Mitochondrial carrier"/>
    <property type="match status" value="1"/>
</dbReference>
<dbReference type="PROSITE" id="PS50920">
    <property type="entry name" value="SOLCAR"/>
    <property type="match status" value="3"/>
</dbReference>
<name>ADT1_WHEAT</name>
<sequence length="331" mass="35962">MTQNLGISVPIMSPSPMFANAPPEKKGVKNFAIDFLMGGVSAAVSKTAAAPIERVKLLIQNQDEMIKAGRLSEPYKGIGDCFGRTIKDEGFGSLWRGNTANVIRYFPTQALNFAFKDYFKRMFNFKKDKDGYWKWFGGNLASGGAAGASSLFFVYSLDYARTRLANDAKASKGGGERQFNGLVDVYRKTLKSDGIAGLYRGFNISCVGIIVYRGLYFGLYDSLKPVLLTGTLQVCFFASFALGWLITNGAGLASYPIDTVRRRMMMTSGEAVKYKSSLDAFQQILKKEGAKSLFKGAGANILRAIAGAGVLSGYDQLQILFFGKKYGSGGA</sequence>
<gene>
    <name type="primary">ANT-G1</name>
</gene>